<dbReference type="EMBL" id="CP000302">
    <property type="protein sequence ID" value="ABE53568.1"/>
    <property type="molecule type" value="Genomic_DNA"/>
</dbReference>
<dbReference type="RefSeq" id="WP_011494735.1">
    <property type="nucleotide sequence ID" value="NC_007954.1"/>
</dbReference>
<dbReference type="SMR" id="Q12SK8"/>
<dbReference type="STRING" id="318161.Sden_0272"/>
<dbReference type="KEGG" id="sdn:Sden_0272"/>
<dbReference type="eggNOG" id="COG0792">
    <property type="taxonomic scope" value="Bacteria"/>
</dbReference>
<dbReference type="HOGENOM" id="CLU_115353_1_0_6"/>
<dbReference type="OrthoDB" id="9794876at2"/>
<dbReference type="Proteomes" id="UP000001982">
    <property type="component" value="Chromosome"/>
</dbReference>
<dbReference type="GO" id="GO:0003676">
    <property type="term" value="F:nucleic acid binding"/>
    <property type="evidence" value="ECO:0007669"/>
    <property type="project" value="InterPro"/>
</dbReference>
<dbReference type="CDD" id="cd20736">
    <property type="entry name" value="PoNe_Nuclease"/>
    <property type="match status" value="1"/>
</dbReference>
<dbReference type="Gene3D" id="3.40.1350.10">
    <property type="match status" value="1"/>
</dbReference>
<dbReference type="HAMAP" id="MF_00048">
    <property type="entry name" value="UPF0102"/>
    <property type="match status" value="1"/>
</dbReference>
<dbReference type="InterPro" id="IPR011335">
    <property type="entry name" value="Restrct_endonuc-II-like"/>
</dbReference>
<dbReference type="InterPro" id="IPR011856">
    <property type="entry name" value="tRNA_endonuc-like_dom_sf"/>
</dbReference>
<dbReference type="InterPro" id="IPR003509">
    <property type="entry name" value="UPF0102_YraN-like"/>
</dbReference>
<dbReference type="NCBIfam" id="NF009150">
    <property type="entry name" value="PRK12497.1-3"/>
    <property type="match status" value="1"/>
</dbReference>
<dbReference type="NCBIfam" id="TIGR00252">
    <property type="entry name" value="YraN family protein"/>
    <property type="match status" value="1"/>
</dbReference>
<dbReference type="PANTHER" id="PTHR34039">
    <property type="entry name" value="UPF0102 PROTEIN YRAN"/>
    <property type="match status" value="1"/>
</dbReference>
<dbReference type="PANTHER" id="PTHR34039:SF1">
    <property type="entry name" value="UPF0102 PROTEIN YRAN"/>
    <property type="match status" value="1"/>
</dbReference>
<dbReference type="Pfam" id="PF02021">
    <property type="entry name" value="UPF0102"/>
    <property type="match status" value="1"/>
</dbReference>
<dbReference type="SUPFAM" id="SSF52980">
    <property type="entry name" value="Restriction endonuclease-like"/>
    <property type="match status" value="1"/>
</dbReference>
<name>Y272_SHEDO</name>
<reference key="1">
    <citation type="submission" date="2006-03" db="EMBL/GenBank/DDBJ databases">
        <title>Complete sequence of Shewanella denitrificans OS217.</title>
        <authorList>
            <consortium name="US DOE Joint Genome Institute"/>
            <person name="Copeland A."/>
            <person name="Lucas S."/>
            <person name="Lapidus A."/>
            <person name="Barry K."/>
            <person name="Detter J.C."/>
            <person name="Glavina del Rio T."/>
            <person name="Hammon N."/>
            <person name="Israni S."/>
            <person name="Dalin E."/>
            <person name="Tice H."/>
            <person name="Pitluck S."/>
            <person name="Brettin T."/>
            <person name="Bruce D."/>
            <person name="Han C."/>
            <person name="Tapia R."/>
            <person name="Gilna P."/>
            <person name="Kiss H."/>
            <person name="Schmutz J."/>
            <person name="Larimer F."/>
            <person name="Land M."/>
            <person name="Hauser L."/>
            <person name="Kyrpides N."/>
            <person name="Lykidis A."/>
            <person name="Richardson P."/>
        </authorList>
    </citation>
    <scope>NUCLEOTIDE SEQUENCE [LARGE SCALE GENOMIC DNA]</scope>
    <source>
        <strain>OS217 / ATCC BAA-1090 / DSM 15013</strain>
    </source>
</reference>
<evidence type="ECO:0000255" key="1">
    <source>
        <dbReference type="HAMAP-Rule" id="MF_00048"/>
    </source>
</evidence>
<organism>
    <name type="scientific">Shewanella denitrificans (strain OS217 / ATCC BAA-1090 / DSM 15013)</name>
    <dbReference type="NCBI Taxonomy" id="318161"/>
    <lineage>
        <taxon>Bacteria</taxon>
        <taxon>Pseudomonadati</taxon>
        <taxon>Pseudomonadota</taxon>
        <taxon>Gammaproteobacteria</taxon>
        <taxon>Alteromonadales</taxon>
        <taxon>Shewanellaceae</taxon>
        <taxon>Shewanella</taxon>
    </lineage>
</organism>
<comment type="similarity">
    <text evidence="1">Belongs to the UPF0102 family.</text>
</comment>
<proteinExistence type="inferred from homology"/>
<protein>
    <recommendedName>
        <fullName evidence="1">UPF0102 protein Sden_0272</fullName>
    </recommendedName>
</protein>
<accession>Q12SK8</accession>
<feature type="chain" id="PRO_1000009258" description="UPF0102 protein Sden_0272">
    <location>
        <begin position="1"/>
        <end position="108"/>
    </location>
</feature>
<gene>
    <name type="ordered locus">Sden_0272</name>
</gene>
<sequence length="108" mass="12627">MTTGQEAEQLARTYLEKQGLEYVAHNVRYPFGELDLVMRHQDFWVFVEVKFRTNTQFGGALQAIRPKQIQRIRKAANHYLQLNKINAPCRFDVLAIDGLQINWLQGCF</sequence>
<keyword id="KW-1185">Reference proteome</keyword>